<keyword id="KW-0450">Lipoyl</keyword>
<keyword id="KW-0496">Mitochondrion</keyword>
<keyword id="KW-0809">Transit peptide</keyword>
<accession>P93255</accession>
<protein>
    <recommendedName>
        <fullName>Glycine cleavage system H protein, mitochondrial</fullName>
    </recommendedName>
</protein>
<sequence length="163" mass="17131">MALRMWASSAANALGVSCAPKSHLLPALSLSRCFSTVLDGLKYASSHEWVKHGGSVATIGITDHAQGHLGDVVFAELPEGGAVSAGKPFASVESVKATSDVNSPISGEIVEVNTKLSDSPGLLNSSPYEEGWMVKVKPSNPAELESLMGSKEYTKFCEEEDAH</sequence>
<name>GCSH_MESCR</name>
<evidence type="ECO:0000250" key="1"/>
<evidence type="ECO:0000255" key="2">
    <source>
        <dbReference type="PROSITE-ProRule" id="PRU01066"/>
    </source>
</evidence>
<evidence type="ECO:0000305" key="3"/>
<gene>
    <name type="primary">GDCSH</name>
</gene>
<proteinExistence type="evidence at transcript level"/>
<comment type="function">
    <text>The glycine cleavage system catalyzes the degradation of glycine. The H protein shuttles the methylamine group of glycine from the P protein to the T protein.</text>
</comment>
<comment type="cofactor">
    <cofactor>
        <name>(R)-lipoate</name>
        <dbReference type="ChEBI" id="CHEBI:83088"/>
    </cofactor>
    <text>Binds 1 lipoyl cofactor covalently.</text>
</comment>
<comment type="subunit">
    <text>The glycine cleavage system is composed of four proteins: P, T, L and H.</text>
</comment>
<comment type="subcellular location">
    <subcellularLocation>
        <location>Mitochondrion</location>
    </subcellularLocation>
</comment>
<comment type="similarity">
    <text evidence="3">Belongs to the GcvH family.</text>
</comment>
<reference key="1">
    <citation type="submission" date="1996-11" db="EMBL/GenBank/DDBJ databases">
        <authorList>
            <person name="Michalowski C.B."/>
            <person name="Bohnert H.J."/>
        </authorList>
    </citation>
    <scope>NUCLEOTIDE SEQUENCE [MRNA]</scope>
</reference>
<dbReference type="EMBL" id="U79768">
    <property type="protein sequence ID" value="AAB38501.1"/>
    <property type="molecule type" value="mRNA"/>
</dbReference>
<dbReference type="PIR" id="T12561">
    <property type="entry name" value="T12561"/>
</dbReference>
<dbReference type="SMR" id="P93255"/>
<dbReference type="GO" id="GO:0005960">
    <property type="term" value="C:glycine cleavage complex"/>
    <property type="evidence" value="ECO:0007669"/>
    <property type="project" value="InterPro"/>
</dbReference>
<dbReference type="GO" id="GO:0005739">
    <property type="term" value="C:mitochondrion"/>
    <property type="evidence" value="ECO:0007669"/>
    <property type="project" value="UniProtKB-SubCell"/>
</dbReference>
<dbReference type="GO" id="GO:0019464">
    <property type="term" value="P:glycine decarboxylation via glycine cleavage system"/>
    <property type="evidence" value="ECO:0007669"/>
    <property type="project" value="InterPro"/>
</dbReference>
<dbReference type="CDD" id="cd06848">
    <property type="entry name" value="GCS_H"/>
    <property type="match status" value="1"/>
</dbReference>
<dbReference type="Gene3D" id="2.40.50.100">
    <property type="match status" value="1"/>
</dbReference>
<dbReference type="HAMAP" id="MF_00272">
    <property type="entry name" value="GcvH"/>
    <property type="match status" value="1"/>
</dbReference>
<dbReference type="InterPro" id="IPR003016">
    <property type="entry name" value="2-oxoA_DH_lipoyl-BS"/>
</dbReference>
<dbReference type="InterPro" id="IPR000089">
    <property type="entry name" value="Biotin_lipoyl"/>
</dbReference>
<dbReference type="InterPro" id="IPR002930">
    <property type="entry name" value="GCV_H"/>
</dbReference>
<dbReference type="InterPro" id="IPR033753">
    <property type="entry name" value="GCV_H/Fam206"/>
</dbReference>
<dbReference type="InterPro" id="IPR017453">
    <property type="entry name" value="GCV_H_sub"/>
</dbReference>
<dbReference type="InterPro" id="IPR011053">
    <property type="entry name" value="Single_hybrid_motif"/>
</dbReference>
<dbReference type="NCBIfam" id="TIGR00527">
    <property type="entry name" value="gcvH"/>
    <property type="match status" value="1"/>
</dbReference>
<dbReference type="NCBIfam" id="NF002270">
    <property type="entry name" value="PRK01202.1"/>
    <property type="match status" value="1"/>
</dbReference>
<dbReference type="PANTHER" id="PTHR11715">
    <property type="entry name" value="GLYCINE CLEAVAGE SYSTEM H PROTEIN"/>
    <property type="match status" value="1"/>
</dbReference>
<dbReference type="PANTHER" id="PTHR11715:SF27">
    <property type="entry name" value="GLYCINE CLEAVAGE SYSTEM H PROTEIN 1, MITOCHONDRIAL-RELATED"/>
    <property type="match status" value="1"/>
</dbReference>
<dbReference type="Pfam" id="PF01597">
    <property type="entry name" value="GCV_H"/>
    <property type="match status" value="1"/>
</dbReference>
<dbReference type="SUPFAM" id="SSF51230">
    <property type="entry name" value="Single hybrid motif"/>
    <property type="match status" value="1"/>
</dbReference>
<dbReference type="PROSITE" id="PS50968">
    <property type="entry name" value="BIOTINYL_LIPOYL"/>
    <property type="match status" value="1"/>
</dbReference>
<dbReference type="PROSITE" id="PS00189">
    <property type="entry name" value="LIPOYL"/>
    <property type="match status" value="1"/>
</dbReference>
<feature type="transit peptide" description="Mitochondrion" evidence="1">
    <location>
        <begin position="1"/>
        <end position="34"/>
    </location>
</feature>
<feature type="chain" id="PRO_0000010736" description="Glycine cleavage system H protein, mitochondrial">
    <location>
        <begin position="35"/>
        <end position="163"/>
    </location>
</feature>
<feature type="domain" description="Lipoyl-binding" evidence="2">
    <location>
        <begin position="56"/>
        <end position="137"/>
    </location>
</feature>
<feature type="modified residue" description="N6-lipoyllysine" evidence="1 2">
    <location>
        <position position="96"/>
    </location>
</feature>
<organism>
    <name type="scientific">Mesembryanthemum crystallinum</name>
    <name type="common">Common ice plant</name>
    <name type="synonym">Cryophytum crystallinum</name>
    <dbReference type="NCBI Taxonomy" id="3544"/>
    <lineage>
        <taxon>Eukaryota</taxon>
        <taxon>Viridiplantae</taxon>
        <taxon>Streptophyta</taxon>
        <taxon>Embryophyta</taxon>
        <taxon>Tracheophyta</taxon>
        <taxon>Spermatophyta</taxon>
        <taxon>Magnoliopsida</taxon>
        <taxon>eudicotyledons</taxon>
        <taxon>Gunneridae</taxon>
        <taxon>Pentapetalae</taxon>
        <taxon>Caryophyllales</taxon>
        <taxon>Aizoaceae</taxon>
        <taxon>Mesembryanthemum</taxon>
        <taxon>Mesembryanthemum subgen. Cryophytum</taxon>
    </lineage>
</organism>